<name>BETB_RHIE6</name>
<gene>
    <name evidence="1" type="primary">betB</name>
    <name type="ordered locus">RHECIAT_CH0001220</name>
</gene>
<dbReference type="EC" id="1.2.1.8" evidence="1"/>
<dbReference type="EMBL" id="CP001074">
    <property type="protein sequence ID" value="ACE90201.1"/>
    <property type="molecule type" value="Genomic_DNA"/>
</dbReference>
<dbReference type="SMR" id="B3PTE1"/>
<dbReference type="KEGG" id="rec:RHECIAT_CH0001220"/>
<dbReference type="eggNOG" id="COG1012">
    <property type="taxonomic scope" value="Bacteria"/>
</dbReference>
<dbReference type="HOGENOM" id="CLU_005391_0_0_5"/>
<dbReference type="UniPathway" id="UPA00529">
    <property type="reaction ID" value="UER00386"/>
</dbReference>
<dbReference type="Proteomes" id="UP000008817">
    <property type="component" value="Chromosome"/>
</dbReference>
<dbReference type="GO" id="GO:0008802">
    <property type="term" value="F:betaine-aldehyde dehydrogenase (NAD+) activity"/>
    <property type="evidence" value="ECO:0007669"/>
    <property type="project" value="UniProtKB-UniRule"/>
</dbReference>
<dbReference type="GO" id="GO:0046872">
    <property type="term" value="F:metal ion binding"/>
    <property type="evidence" value="ECO:0007669"/>
    <property type="project" value="UniProtKB-KW"/>
</dbReference>
<dbReference type="GO" id="GO:0019285">
    <property type="term" value="P:glycine betaine biosynthetic process from choline"/>
    <property type="evidence" value="ECO:0007669"/>
    <property type="project" value="UniProtKB-UniRule"/>
</dbReference>
<dbReference type="CDD" id="cd07090">
    <property type="entry name" value="ALDH_F9_TMBADH"/>
    <property type="match status" value="1"/>
</dbReference>
<dbReference type="FunFam" id="3.40.309.10:FF:000012">
    <property type="entry name" value="Betaine aldehyde dehydrogenase"/>
    <property type="match status" value="1"/>
</dbReference>
<dbReference type="FunFam" id="3.40.605.10:FF:000007">
    <property type="entry name" value="NAD/NADP-dependent betaine aldehyde dehydrogenase"/>
    <property type="match status" value="1"/>
</dbReference>
<dbReference type="Gene3D" id="3.40.605.10">
    <property type="entry name" value="Aldehyde Dehydrogenase, Chain A, domain 1"/>
    <property type="match status" value="1"/>
</dbReference>
<dbReference type="Gene3D" id="3.40.309.10">
    <property type="entry name" value="Aldehyde Dehydrogenase, Chain A, domain 2"/>
    <property type="match status" value="1"/>
</dbReference>
<dbReference type="HAMAP" id="MF_00804">
    <property type="entry name" value="BADH"/>
    <property type="match status" value="1"/>
</dbReference>
<dbReference type="InterPro" id="IPR016161">
    <property type="entry name" value="Ald_DH/histidinol_DH"/>
</dbReference>
<dbReference type="InterPro" id="IPR016163">
    <property type="entry name" value="Ald_DH_C"/>
</dbReference>
<dbReference type="InterPro" id="IPR016160">
    <property type="entry name" value="Ald_DH_CS_CYS"/>
</dbReference>
<dbReference type="InterPro" id="IPR029510">
    <property type="entry name" value="Ald_DH_CS_GLU"/>
</dbReference>
<dbReference type="InterPro" id="IPR016162">
    <property type="entry name" value="Ald_DH_N"/>
</dbReference>
<dbReference type="InterPro" id="IPR015590">
    <property type="entry name" value="Aldehyde_DH_dom"/>
</dbReference>
<dbReference type="InterPro" id="IPR011264">
    <property type="entry name" value="BADH"/>
</dbReference>
<dbReference type="NCBIfam" id="TIGR01804">
    <property type="entry name" value="BADH"/>
    <property type="match status" value="1"/>
</dbReference>
<dbReference type="NCBIfam" id="NF009725">
    <property type="entry name" value="PRK13252.1"/>
    <property type="match status" value="1"/>
</dbReference>
<dbReference type="PANTHER" id="PTHR11699">
    <property type="entry name" value="ALDEHYDE DEHYDROGENASE-RELATED"/>
    <property type="match status" value="1"/>
</dbReference>
<dbReference type="Pfam" id="PF00171">
    <property type="entry name" value="Aldedh"/>
    <property type="match status" value="1"/>
</dbReference>
<dbReference type="SUPFAM" id="SSF53720">
    <property type="entry name" value="ALDH-like"/>
    <property type="match status" value="1"/>
</dbReference>
<dbReference type="PROSITE" id="PS00070">
    <property type="entry name" value="ALDEHYDE_DEHYDR_CYS"/>
    <property type="match status" value="1"/>
</dbReference>
<dbReference type="PROSITE" id="PS00687">
    <property type="entry name" value="ALDEHYDE_DEHYDR_GLU"/>
    <property type="match status" value="1"/>
</dbReference>
<evidence type="ECO:0000255" key="1">
    <source>
        <dbReference type="HAMAP-Rule" id="MF_00804"/>
    </source>
</evidence>
<accession>B3PTE1</accession>
<organism>
    <name type="scientific">Rhizobium etli (strain CIAT 652)</name>
    <dbReference type="NCBI Taxonomy" id="491916"/>
    <lineage>
        <taxon>Bacteria</taxon>
        <taxon>Pseudomonadati</taxon>
        <taxon>Pseudomonadota</taxon>
        <taxon>Alphaproteobacteria</taxon>
        <taxon>Hyphomicrobiales</taxon>
        <taxon>Rhizobiaceae</taxon>
        <taxon>Rhizobium/Agrobacterium group</taxon>
        <taxon>Rhizobium</taxon>
    </lineage>
</organism>
<keyword id="KW-0479">Metal-binding</keyword>
<keyword id="KW-0520">NAD</keyword>
<keyword id="KW-0521">NADP</keyword>
<keyword id="KW-0558">Oxidation</keyword>
<keyword id="KW-0560">Oxidoreductase</keyword>
<keyword id="KW-0630">Potassium</keyword>
<sequence length="487" mass="51692">MKAQPKASHFIDGEYVEDSDGTVIESLYPATGEVIARLHAATPAIVEKAIAAAKSAQPEWAAMSPMARGRILKRAADIMRERNRELSELETLDTGKPIQETIVADPTSGADAFEFFGGVAPAGLNGSHIPLGQDFAYTKRVPLGVCVGIGAWNYPQQIACWKGAPALIAGNAMVFKPSENTPLGALKIAEILHEAGLPKGLFNVIQGDRDTGPLLVNHPDVAKVSLTGSVPTGRRVAAAAAGSLKHVTMELGGKSPLIVFDDADLDSAVGGAMLGNFYSTGQVCSNGTRVFVQKGIKTEFLKRLKARTEAMLIGDPMDEATQIGPMVSWAQREKVVAYIEKGKAEGATLVAGGGIPNNVSGEGYYVQPTVFADVTDEMTIAREEIFGPVMSVLDFDDEDEVITRANASEFGLSGGVFTADLTRAHRVVDRLEAGTLWINAYNLAPVEIPFGGSKQSGFGRENSLAALEHYSELKTVYVGMGPVQAPY</sequence>
<reference key="1">
    <citation type="journal article" date="2010" name="Appl. Environ. Microbiol.">
        <title>Conserved symbiotic plasmid DNA sequences in the multireplicon pangenomic structure of Rhizobium etli.</title>
        <authorList>
            <person name="Gonzalez V."/>
            <person name="Acosta J.L."/>
            <person name="Santamaria R.I."/>
            <person name="Bustos P."/>
            <person name="Fernandez J.L."/>
            <person name="Hernandez Gonzalez I.L."/>
            <person name="Diaz R."/>
            <person name="Flores M."/>
            <person name="Palacios R."/>
            <person name="Mora J."/>
            <person name="Davila G."/>
        </authorList>
    </citation>
    <scope>NUCLEOTIDE SEQUENCE [LARGE SCALE GENOMIC DNA]</scope>
    <source>
        <strain>CIAT 652</strain>
    </source>
</reference>
<proteinExistence type="inferred from homology"/>
<protein>
    <recommendedName>
        <fullName evidence="1">Betaine aldehyde dehydrogenase</fullName>
        <shortName evidence="1">BADH</shortName>
        <ecNumber evidence="1">1.2.1.8</ecNumber>
    </recommendedName>
</protein>
<feature type="chain" id="PRO_1000133957" description="Betaine aldehyde dehydrogenase">
    <location>
        <begin position="1"/>
        <end position="487"/>
    </location>
</feature>
<feature type="active site" description="Charge relay system" evidence="1">
    <location>
        <position position="162"/>
    </location>
</feature>
<feature type="active site" description="Proton acceptor" evidence="1">
    <location>
        <position position="250"/>
    </location>
</feature>
<feature type="active site" description="Nucleophile" evidence="1">
    <location>
        <position position="284"/>
    </location>
</feature>
<feature type="active site" description="Charge relay system" evidence="1">
    <location>
        <position position="461"/>
    </location>
</feature>
<feature type="binding site" evidence="1">
    <location>
        <position position="26"/>
    </location>
    <ligand>
        <name>K(+)</name>
        <dbReference type="ChEBI" id="CHEBI:29103"/>
        <label>1</label>
    </ligand>
</feature>
<feature type="binding site" evidence="1">
    <location>
        <position position="93"/>
    </location>
    <ligand>
        <name>K(+)</name>
        <dbReference type="ChEBI" id="CHEBI:29103"/>
        <label>1</label>
    </ligand>
</feature>
<feature type="binding site" evidence="1">
    <location>
        <begin position="150"/>
        <end position="152"/>
    </location>
    <ligand>
        <name>NAD(+)</name>
        <dbReference type="ChEBI" id="CHEBI:57540"/>
    </ligand>
</feature>
<feature type="binding site" evidence="1">
    <location>
        <begin position="176"/>
        <end position="179"/>
    </location>
    <ligand>
        <name>NAD(+)</name>
        <dbReference type="ChEBI" id="CHEBI:57540"/>
    </ligand>
</feature>
<feature type="binding site" evidence="1">
    <location>
        <begin position="229"/>
        <end position="232"/>
    </location>
    <ligand>
        <name>NAD(+)</name>
        <dbReference type="ChEBI" id="CHEBI:57540"/>
    </ligand>
</feature>
<feature type="binding site" evidence="1">
    <location>
        <position position="244"/>
    </location>
    <ligand>
        <name>K(+)</name>
        <dbReference type="ChEBI" id="CHEBI:29103"/>
        <label>2</label>
    </ligand>
</feature>
<feature type="binding site" evidence="1">
    <location>
        <position position="252"/>
    </location>
    <ligand>
        <name>NAD(+)</name>
        <dbReference type="ChEBI" id="CHEBI:57540"/>
    </ligand>
</feature>
<feature type="binding site" description="covalent" evidence="1">
    <location>
        <position position="284"/>
    </location>
    <ligand>
        <name>NAD(+)</name>
        <dbReference type="ChEBI" id="CHEBI:57540"/>
    </ligand>
</feature>
<feature type="binding site" evidence="1">
    <location>
        <position position="384"/>
    </location>
    <ligand>
        <name>NAD(+)</name>
        <dbReference type="ChEBI" id="CHEBI:57540"/>
    </ligand>
</feature>
<feature type="binding site" evidence="1">
    <location>
        <position position="454"/>
    </location>
    <ligand>
        <name>K(+)</name>
        <dbReference type="ChEBI" id="CHEBI:29103"/>
        <label>2</label>
    </ligand>
</feature>
<feature type="binding site" evidence="1">
    <location>
        <position position="457"/>
    </location>
    <ligand>
        <name>K(+)</name>
        <dbReference type="ChEBI" id="CHEBI:29103"/>
        <label>2</label>
    </ligand>
</feature>
<feature type="modified residue" description="Cysteine sulfenic acid (-SOH)" evidence="1">
    <location>
        <position position="284"/>
    </location>
</feature>
<comment type="function">
    <text evidence="1">Involved in the biosynthesis of the osmoprotectant glycine betaine. Catalyzes the irreversible oxidation of betaine aldehyde to the corresponding acid.</text>
</comment>
<comment type="catalytic activity">
    <reaction evidence="1">
        <text>betaine aldehyde + NAD(+) + H2O = glycine betaine + NADH + 2 H(+)</text>
        <dbReference type="Rhea" id="RHEA:15305"/>
        <dbReference type="ChEBI" id="CHEBI:15377"/>
        <dbReference type="ChEBI" id="CHEBI:15378"/>
        <dbReference type="ChEBI" id="CHEBI:15710"/>
        <dbReference type="ChEBI" id="CHEBI:17750"/>
        <dbReference type="ChEBI" id="CHEBI:57540"/>
        <dbReference type="ChEBI" id="CHEBI:57945"/>
        <dbReference type="EC" id="1.2.1.8"/>
    </reaction>
    <physiologicalReaction direction="left-to-right" evidence="1">
        <dbReference type="Rhea" id="RHEA:15306"/>
    </physiologicalReaction>
</comment>
<comment type="cofactor">
    <cofactor evidence="1">
        <name>K(+)</name>
        <dbReference type="ChEBI" id="CHEBI:29103"/>
    </cofactor>
    <text evidence="1">Binds 2 potassium ions per subunit.</text>
</comment>
<comment type="pathway">
    <text evidence="1">Amine and polyamine biosynthesis; betaine biosynthesis via choline pathway; betaine from betaine aldehyde: step 1/1.</text>
</comment>
<comment type="subunit">
    <text evidence="1">Dimer of dimers.</text>
</comment>
<comment type="similarity">
    <text evidence="1">Belongs to the aldehyde dehydrogenase family.</text>
</comment>